<accession>P39599</accession>
<proteinExistence type="inferred from homology"/>
<gene>
    <name type="primary">ywcA</name>
    <name type="ordered locus">BSU38240</name>
    <name type="ORF">ipa-31r</name>
</gene>
<keyword id="KW-1003">Cell membrane</keyword>
<keyword id="KW-0406">Ion transport</keyword>
<keyword id="KW-0472">Membrane</keyword>
<keyword id="KW-1185">Reference proteome</keyword>
<keyword id="KW-0915">Sodium</keyword>
<keyword id="KW-0739">Sodium transport</keyword>
<keyword id="KW-0769">Symport</keyword>
<keyword id="KW-0812">Transmembrane</keyword>
<keyword id="KW-1133">Transmembrane helix</keyword>
<keyword id="KW-0813">Transport</keyword>
<protein>
    <recommendedName>
        <fullName>Uncharacterized symporter YwcA</fullName>
    </recommendedName>
</protein>
<evidence type="ECO:0000255" key="1"/>
<evidence type="ECO:0000305" key="2"/>
<feature type="chain" id="PRO_0000105418" description="Uncharacterized symporter YwcA">
    <location>
        <begin position="1"/>
        <end position="513"/>
    </location>
</feature>
<feature type="transmembrane region" description="Helical" evidence="1">
    <location>
        <begin position="3"/>
        <end position="23"/>
    </location>
</feature>
<feature type="transmembrane region" description="Helical" evidence="1">
    <location>
        <begin position="47"/>
        <end position="67"/>
    </location>
</feature>
<feature type="transmembrane region" description="Helical" evidence="1">
    <location>
        <begin position="71"/>
        <end position="91"/>
    </location>
</feature>
<feature type="transmembrane region" description="Helical" evidence="1">
    <location>
        <begin position="129"/>
        <end position="149"/>
    </location>
</feature>
<feature type="transmembrane region" description="Helical" evidence="1">
    <location>
        <begin position="153"/>
        <end position="173"/>
    </location>
</feature>
<feature type="transmembrane region" description="Helical" evidence="1">
    <location>
        <begin position="177"/>
        <end position="197"/>
    </location>
</feature>
<feature type="transmembrane region" description="Helical" evidence="1">
    <location>
        <begin position="233"/>
        <end position="253"/>
    </location>
</feature>
<feature type="transmembrane region" description="Helical" evidence="1">
    <location>
        <begin position="273"/>
        <end position="293"/>
    </location>
</feature>
<feature type="transmembrane region" description="Helical" evidence="1">
    <location>
        <begin position="320"/>
        <end position="340"/>
    </location>
</feature>
<feature type="transmembrane region" description="Helical" evidence="1">
    <location>
        <begin position="374"/>
        <end position="394"/>
    </location>
</feature>
<feature type="transmembrane region" description="Helical" evidence="1">
    <location>
        <begin position="395"/>
        <end position="415"/>
    </location>
</feature>
<feature type="transmembrane region" description="Helical" evidence="1">
    <location>
        <begin position="424"/>
        <end position="444"/>
    </location>
</feature>
<feature type="transmembrane region" description="Helical" evidence="1">
    <location>
        <begin position="462"/>
        <end position="482"/>
    </location>
</feature>
<reference key="1">
    <citation type="journal article" date="1993" name="Mol. Microbiol.">
        <title>Bacillus subtilis genome project: cloning and sequencing of the 97 kb region from 325 degrees to 333 degrees.</title>
        <authorList>
            <person name="Glaser P."/>
            <person name="Kunst F."/>
            <person name="Arnaud M."/>
            <person name="Coudart M.P."/>
            <person name="Gonzales W."/>
            <person name="Hullo M.-F."/>
            <person name="Ionescu M."/>
            <person name="Lubochinsky B."/>
            <person name="Marcelino L."/>
            <person name="Moszer I."/>
            <person name="Presecan E."/>
            <person name="Santana M."/>
            <person name="Schneider E."/>
            <person name="Schweizer J."/>
            <person name="Vertes A."/>
            <person name="Rapoport G."/>
            <person name="Danchin A."/>
        </authorList>
    </citation>
    <scope>NUCLEOTIDE SEQUENCE [GENOMIC DNA]</scope>
    <source>
        <strain>168</strain>
    </source>
</reference>
<reference key="2">
    <citation type="journal article" date="1997" name="Nature">
        <title>The complete genome sequence of the Gram-positive bacterium Bacillus subtilis.</title>
        <authorList>
            <person name="Kunst F."/>
            <person name="Ogasawara N."/>
            <person name="Moszer I."/>
            <person name="Albertini A.M."/>
            <person name="Alloni G."/>
            <person name="Azevedo V."/>
            <person name="Bertero M.G."/>
            <person name="Bessieres P."/>
            <person name="Bolotin A."/>
            <person name="Borchert S."/>
            <person name="Borriss R."/>
            <person name="Boursier L."/>
            <person name="Brans A."/>
            <person name="Braun M."/>
            <person name="Brignell S.C."/>
            <person name="Bron S."/>
            <person name="Brouillet S."/>
            <person name="Bruschi C.V."/>
            <person name="Caldwell B."/>
            <person name="Capuano V."/>
            <person name="Carter N.M."/>
            <person name="Choi S.-K."/>
            <person name="Codani J.-J."/>
            <person name="Connerton I.F."/>
            <person name="Cummings N.J."/>
            <person name="Daniel R.A."/>
            <person name="Denizot F."/>
            <person name="Devine K.M."/>
            <person name="Duesterhoeft A."/>
            <person name="Ehrlich S.D."/>
            <person name="Emmerson P.T."/>
            <person name="Entian K.-D."/>
            <person name="Errington J."/>
            <person name="Fabret C."/>
            <person name="Ferrari E."/>
            <person name="Foulger D."/>
            <person name="Fritz C."/>
            <person name="Fujita M."/>
            <person name="Fujita Y."/>
            <person name="Fuma S."/>
            <person name="Galizzi A."/>
            <person name="Galleron N."/>
            <person name="Ghim S.-Y."/>
            <person name="Glaser P."/>
            <person name="Goffeau A."/>
            <person name="Golightly E.J."/>
            <person name="Grandi G."/>
            <person name="Guiseppi G."/>
            <person name="Guy B.J."/>
            <person name="Haga K."/>
            <person name="Haiech J."/>
            <person name="Harwood C.R."/>
            <person name="Henaut A."/>
            <person name="Hilbert H."/>
            <person name="Holsappel S."/>
            <person name="Hosono S."/>
            <person name="Hullo M.-F."/>
            <person name="Itaya M."/>
            <person name="Jones L.-M."/>
            <person name="Joris B."/>
            <person name="Karamata D."/>
            <person name="Kasahara Y."/>
            <person name="Klaerr-Blanchard M."/>
            <person name="Klein C."/>
            <person name="Kobayashi Y."/>
            <person name="Koetter P."/>
            <person name="Koningstein G."/>
            <person name="Krogh S."/>
            <person name="Kumano M."/>
            <person name="Kurita K."/>
            <person name="Lapidus A."/>
            <person name="Lardinois S."/>
            <person name="Lauber J."/>
            <person name="Lazarevic V."/>
            <person name="Lee S.-M."/>
            <person name="Levine A."/>
            <person name="Liu H."/>
            <person name="Masuda S."/>
            <person name="Mauel C."/>
            <person name="Medigue C."/>
            <person name="Medina N."/>
            <person name="Mellado R.P."/>
            <person name="Mizuno M."/>
            <person name="Moestl D."/>
            <person name="Nakai S."/>
            <person name="Noback M."/>
            <person name="Noone D."/>
            <person name="O'Reilly M."/>
            <person name="Ogawa K."/>
            <person name="Ogiwara A."/>
            <person name="Oudega B."/>
            <person name="Park S.-H."/>
            <person name="Parro V."/>
            <person name="Pohl T.M."/>
            <person name="Portetelle D."/>
            <person name="Porwollik S."/>
            <person name="Prescott A.M."/>
            <person name="Presecan E."/>
            <person name="Pujic P."/>
            <person name="Purnelle B."/>
            <person name="Rapoport G."/>
            <person name="Rey M."/>
            <person name="Reynolds S."/>
            <person name="Rieger M."/>
            <person name="Rivolta C."/>
            <person name="Rocha E."/>
            <person name="Roche B."/>
            <person name="Rose M."/>
            <person name="Sadaie Y."/>
            <person name="Sato T."/>
            <person name="Scanlan E."/>
            <person name="Schleich S."/>
            <person name="Schroeter R."/>
            <person name="Scoffone F."/>
            <person name="Sekiguchi J."/>
            <person name="Sekowska A."/>
            <person name="Seror S.J."/>
            <person name="Serror P."/>
            <person name="Shin B.-S."/>
            <person name="Soldo B."/>
            <person name="Sorokin A."/>
            <person name="Tacconi E."/>
            <person name="Takagi T."/>
            <person name="Takahashi H."/>
            <person name="Takemaru K."/>
            <person name="Takeuchi M."/>
            <person name="Tamakoshi A."/>
            <person name="Tanaka T."/>
            <person name="Terpstra P."/>
            <person name="Tognoni A."/>
            <person name="Tosato V."/>
            <person name="Uchiyama S."/>
            <person name="Vandenbol M."/>
            <person name="Vannier F."/>
            <person name="Vassarotti A."/>
            <person name="Viari A."/>
            <person name="Wambutt R."/>
            <person name="Wedler E."/>
            <person name="Wedler H."/>
            <person name="Weitzenegger T."/>
            <person name="Winters P."/>
            <person name="Wipat A."/>
            <person name="Yamamoto H."/>
            <person name="Yamane K."/>
            <person name="Yasumoto K."/>
            <person name="Yata K."/>
            <person name="Yoshida K."/>
            <person name="Yoshikawa H.-F."/>
            <person name="Zumstein E."/>
            <person name="Yoshikawa H."/>
            <person name="Danchin A."/>
        </authorList>
    </citation>
    <scope>NUCLEOTIDE SEQUENCE [LARGE SCALE GENOMIC DNA]</scope>
    <source>
        <strain>168</strain>
    </source>
</reference>
<reference key="3">
    <citation type="journal article" date="2009" name="Microbiology">
        <title>From a consortium sequence to a unified sequence: the Bacillus subtilis 168 reference genome a decade later.</title>
        <authorList>
            <person name="Barbe V."/>
            <person name="Cruveiller S."/>
            <person name="Kunst F."/>
            <person name="Lenoble P."/>
            <person name="Meurice G."/>
            <person name="Sekowska A."/>
            <person name="Vallenet D."/>
            <person name="Wang T."/>
            <person name="Moszer I."/>
            <person name="Medigue C."/>
            <person name="Danchin A."/>
        </authorList>
    </citation>
    <scope>SEQUENCE REVISION TO N-TERMINUS</scope>
</reference>
<comment type="subcellular location">
    <subcellularLocation>
        <location evidence="2">Cell membrane</location>
        <topology evidence="2">Multi-pass membrane protein</topology>
    </subcellularLocation>
</comment>
<comment type="similarity">
    <text evidence="2">Belongs to the sodium:solute symporter (SSF) (TC 2.A.21) family.</text>
</comment>
<comment type="sequence caution" evidence="2">
    <conflict type="frameshift">
        <sequence resource="EMBL-CDS" id="CAA51587"/>
    </conflict>
</comment>
<sequence length="513" mass="54243">MNMTAFLLFLAIVGLTLIITYFAAKRTKTTSEFYTAGGGLTGVQNGLAIAGDYMSAASFLGIAGMIALYGFDGFFYSIGFLVAYLVVLYIVAEPLRNLGKYTMADMIAARFKEKKIRGVAALNTIAISTFYMIAQLVGAGALIKLLLGLDYTAAVLIVGVLMTIYVVFGGMIATSWVQIIKAVLLMAGTLVISIIVFSKFGFSLNTMFEQMKTATPLGADFLNPGNKYKVPLETLSLNLALVLGTAGLPHILIRFYTVKDAKTARTSVVSATWIIGVFYIMTVFLGFGAAAFVGFDAITAADQAGNMAAPLLAKALGGDFLFAFVSAIAFATILAVVTGLVLSAASAFAHDIYSQIIRKGEATEKEQMKAARWASVAVSVLSILLAIFAQSLNVAFLVALAFAVAASANLPLIVFTVFWKRFNASGALWGSLTGLISALVLVSMSPSVWDPAGGAIFTGDPLIPLSNPGIISIPLGFLGAWLGTVLSSDKTIDEDTFAEIQVKAHTGVHMEQE</sequence>
<name>YWCA_BACSU</name>
<dbReference type="EMBL" id="X73124">
    <property type="protein sequence ID" value="CAA51587.1"/>
    <property type="status" value="ALT_FRAME"/>
    <property type="molecule type" value="Genomic_DNA"/>
</dbReference>
<dbReference type="EMBL" id="AL009126">
    <property type="protein sequence ID" value="CAB15850.2"/>
    <property type="molecule type" value="Genomic_DNA"/>
</dbReference>
<dbReference type="PIR" id="S39686">
    <property type="entry name" value="S39686"/>
</dbReference>
<dbReference type="RefSeq" id="WP_003227390.1">
    <property type="nucleotide sequence ID" value="NZ_OZ025638.1"/>
</dbReference>
<dbReference type="SMR" id="P39599"/>
<dbReference type="FunCoup" id="P39599">
    <property type="interactions" value="584"/>
</dbReference>
<dbReference type="STRING" id="224308.BSU38240"/>
<dbReference type="PaxDb" id="224308-BSU38240"/>
<dbReference type="EnsemblBacteria" id="CAB15850">
    <property type="protein sequence ID" value="CAB15850"/>
    <property type="gene ID" value="BSU_38240"/>
</dbReference>
<dbReference type="GeneID" id="937320"/>
<dbReference type="KEGG" id="bsu:BSU38240"/>
<dbReference type="PATRIC" id="fig|224308.179.peg.4140"/>
<dbReference type="eggNOG" id="COG4147">
    <property type="taxonomic scope" value="Bacteria"/>
</dbReference>
<dbReference type="InParanoid" id="P39599"/>
<dbReference type="OrthoDB" id="9814523at2"/>
<dbReference type="PhylomeDB" id="P39599"/>
<dbReference type="BioCyc" id="BSUB:BSU38240-MONOMER"/>
<dbReference type="Proteomes" id="UP000001570">
    <property type="component" value="Chromosome"/>
</dbReference>
<dbReference type="GO" id="GO:0005886">
    <property type="term" value="C:plasma membrane"/>
    <property type="evidence" value="ECO:0000318"/>
    <property type="project" value="GO_Central"/>
</dbReference>
<dbReference type="GO" id="GO:0015123">
    <property type="term" value="F:acetate transmembrane transporter activity"/>
    <property type="evidence" value="ECO:0000318"/>
    <property type="project" value="GO_Central"/>
</dbReference>
<dbReference type="GO" id="GO:0015293">
    <property type="term" value="F:symporter activity"/>
    <property type="evidence" value="ECO:0007669"/>
    <property type="project" value="UniProtKB-KW"/>
</dbReference>
<dbReference type="GO" id="GO:0006847">
    <property type="term" value="P:plasma membrane acetate transport"/>
    <property type="evidence" value="ECO:0000318"/>
    <property type="project" value="GO_Central"/>
</dbReference>
<dbReference type="GO" id="GO:0006814">
    <property type="term" value="P:sodium ion transport"/>
    <property type="evidence" value="ECO:0007669"/>
    <property type="project" value="UniProtKB-KW"/>
</dbReference>
<dbReference type="CDD" id="cd11480">
    <property type="entry name" value="SLC5sbd_u4"/>
    <property type="match status" value="1"/>
</dbReference>
<dbReference type="FunFam" id="1.20.1730.10:FF:000009">
    <property type="entry name" value="Cation acetate symporter"/>
    <property type="match status" value="1"/>
</dbReference>
<dbReference type="Gene3D" id="1.20.1730.10">
    <property type="entry name" value="Sodium/glucose cotransporter"/>
    <property type="match status" value="1"/>
</dbReference>
<dbReference type="InterPro" id="IPR038377">
    <property type="entry name" value="Na/Glc_symporter_sf"/>
</dbReference>
<dbReference type="InterPro" id="IPR001734">
    <property type="entry name" value="Na/solute_symporter"/>
</dbReference>
<dbReference type="InterPro" id="IPR018212">
    <property type="entry name" value="Na/solute_symporter_CS"/>
</dbReference>
<dbReference type="InterPro" id="IPR050277">
    <property type="entry name" value="Sodium:Solute_Symporter"/>
</dbReference>
<dbReference type="NCBIfam" id="TIGR00813">
    <property type="entry name" value="sss"/>
    <property type="match status" value="1"/>
</dbReference>
<dbReference type="PANTHER" id="PTHR48086:SF6">
    <property type="entry name" value="CATION_ACETATE SYMPORTER ACTP"/>
    <property type="match status" value="1"/>
</dbReference>
<dbReference type="PANTHER" id="PTHR48086">
    <property type="entry name" value="SODIUM/PROLINE SYMPORTER-RELATED"/>
    <property type="match status" value="1"/>
</dbReference>
<dbReference type="Pfam" id="PF00474">
    <property type="entry name" value="SSF"/>
    <property type="match status" value="1"/>
</dbReference>
<dbReference type="PROSITE" id="PS00456">
    <property type="entry name" value="NA_SOLUT_SYMP_1"/>
    <property type="match status" value="1"/>
</dbReference>
<dbReference type="PROSITE" id="PS00457">
    <property type="entry name" value="NA_SOLUT_SYMP_2"/>
    <property type="match status" value="1"/>
</dbReference>
<dbReference type="PROSITE" id="PS50283">
    <property type="entry name" value="NA_SOLUT_SYMP_3"/>
    <property type="match status" value="1"/>
</dbReference>
<organism>
    <name type="scientific">Bacillus subtilis (strain 168)</name>
    <dbReference type="NCBI Taxonomy" id="224308"/>
    <lineage>
        <taxon>Bacteria</taxon>
        <taxon>Bacillati</taxon>
        <taxon>Bacillota</taxon>
        <taxon>Bacilli</taxon>
        <taxon>Bacillales</taxon>
        <taxon>Bacillaceae</taxon>
        <taxon>Bacillus</taxon>
    </lineage>
</organism>